<reference key="1">
    <citation type="journal article" date="2006" name="Proc. Natl. Acad. Sci. U.S.A.">
        <title>Comparative genomics of the lactic acid bacteria.</title>
        <authorList>
            <person name="Makarova K.S."/>
            <person name="Slesarev A."/>
            <person name="Wolf Y.I."/>
            <person name="Sorokin A."/>
            <person name="Mirkin B."/>
            <person name="Koonin E.V."/>
            <person name="Pavlov A."/>
            <person name="Pavlova N."/>
            <person name="Karamychev V."/>
            <person name="Polouchine N."/>
            <person name="Shakhova V."/>
            <person name="Grigoriev I."/>
            <person name="Lou Y."/>
            <person name="Rohksar D."/>
            <person name="Lucas S."/>
            <person name="Huang K."/>
            <person name="Goodstein D.M."/>
            <person name="Hawkins T."/>
            <person name="Plengvidhya V."/>
            <person name="Welker D."/>
            <person name="Hughes J."/>
            <person name="Goh Y."/>
            <person name="Benson A."/>
            <person name="Baldwin K."/>
            <person name="Lee J.-H."/>
            <person name="Diaz-Muniz I."/>
            <person name="Dosti B."/>
            <person name="Smeianov V."/>
            <person name="Wechter W."/>
            <person name="Barabote R."/>
            <person name="Lorca G."/>
            <person name="Altermann E."/>
            <person name="Barrangou R."/>
            <person name="Ganesan B."/>
            <person name="Xie Y."/>
            <person name="Rawsthorne H."/>
            <person name="Tamir D."/>
            <person name="Parker C."/>
            <person name="Breidt F."/>
            <person name="Broadbent J.R."/>
            <person name="Hutkins R."/>
            <person name="O'Sullivan D."/>
            <person name="Steele J."/>
            <person name="Unlu G."/>
            <person name="Saier M.H. Jr."/>
            <person name="Klaenhammer T."/>
            <person name="Richardson P."/>
            <person name="Kozyavkin S."/>
            <person name="Weimer B.C."/>
            <person name="Mills D.A."/>
        </authorList>
    </citation>
    <scope>NUCLEOTIDE SEQUENCE [LARGE SCALE GENOMIC DNA]</scope>
    <source>
        <strain>ATCC BAA-491 / LMD-9</strain>
    </source>
</reference>
<evidence type="ECO:0000255" key="1">
    <source>
        <dbReference type="HAMAP-Rule" id="MF_01210"/>
    </source>
</evidence>
<keyword id="KW-0028">Amino-acid biosynthesis</keyword>
<keyword id="KW-0055">Arginine biosynthesis</keyword>
<keyword id="KW-0067">ATP-binding</keyword>
<keyword id="KW-0436">Ligase</keyword>
<keyword id="KW-0460">Magnesium</keyword>
<keyword id="KW-0464">Manganese</keyword>
<keyword id="KW-0479">Metal-binding</keyword>
<keyword id="KW-0547">Nucleotide-binding</keyword>
<keyword id="KW-0665">Pyrimidine biosynthesis</keyword>
<keyword id="KW-0677">Repeat</keyword>
<protein>
    <recommendedName>
        <fullName evidence="1">Carbamoyl phosphate synthase large chain</fullName>
        <ecNumber evidence="1">6.3.4.16</ecNumber>
        <ecNumber evidence="1">6.3.5.5</ecNumber>
    </recommendedName>
    <alternativeName>
        <fullName evidence="1">Carbamoyl phosphate synthetase ammonia chain</fullName>
    </alternativeName>
</protein>
<organism>
    <name type="scientific">Streptococcus thermophilus (strain ATCC BAA-491 / LMD-9)</name>
    <dbReference type="NCBI Taxonomy" id="322159"/>
    <lineage>
        <taxon>Bacteria</taxon>
        <taxon>Bacillati</taxon>
        <taxon>Bacillota</taxon>
        <taxon>Bacilli</taxon>
        <taxon>Lactobacillales</taxon>
        <taxon>Streptococcaceae</taxon>
        <taxon>Streptococcus</taxon>
    </lineage>
</organism>
<name>CARB_STRTD</name>
<proteinExistence type="inferred from homology"/>
<dbReference type="EC" id="6.3.4.16" evidence="1"/>
<dbReference type="EC" id="6.3.5.5" evidence="1"/>
<dbReference type="EMBL" id="CP000419">
    <property type="protein sequence ID" value="ABJ65834.1"/>
    <property type="molecule type" value="Genomic_DNA"/>
</dbReference>
<dbReference type="RefSeq" id="WP_011225627.1">
    <property type="nucleotide sequence ID" value="NC_008532.1"/>
</dbReference>
<dbReference type="SMR" id="Q03LT8"/>
<dbReference type="GeneID" id="66898430"/>
<dbReference type="KEGG" id="ste:STER_0559"/>
<dbReference type="HOGENOM" id="CLU_000513_1_2_9"/>
<dbReference type="UniPathway" id="UPA00068">
    <property type="reaction ID" value="UER00171"/>
</dbReference>
<dbReference type="UniPathway" id="UPA00070">
    <property type="reaction ID" value="UER00115"/>
</dbReference>
<dbReference type="GO" id="GO:0005737">
    <property type="term" value="C:cytoplasm"/>
    <property type="evidence" value="ECO:0007669"/>
    <property type="project" value="TreeGrafter"/>
</dbReference>
<dbReference type="GO" id="GO:0005524">
    <property type="term" value="F:ATP binding"/>
    <property type="evidence" value="ECO:0007669"/>
    <property type="project" value="UniProtKB-UniRule"/>
</dbReference>
<dbReference type="GO" id="GO:0004087">
    <property type="term" value="F:carbamoyl-phosphate synthase (ammonia) activity"/>
    <property type="evidence" value="ECO:0007669"/>
    <property type="project" value="RHEA"/>
</dbReference>
<dbReference type="GO" id="GO:0004088">
    <property type="term" value="F:carbamoyl-phosphate synthase (glutamine-hydrolyzing) activity"/>
    <property type="evidence" value="ECO:0007669"/>
    <property type="project" value="UniProtKB-UniRule"/>
</dbReference>
<dbReference type="GO" id="GO:0046872">
    <property type="term" value="F:metal ion binding"/>
    <property type="evidence" value="ECO:0007669"/>
    <property type="project" value="UniProtKB-KW"/>
</dbReference>
<dbReference type="GO" id="GO:0044205">
    <property type="term" value="P:'de novo' UMP biosynthetic process"/>
    <property type="evidence" value="ECO:0007669"/>
    <property type="project" value="UniProtKB-UniRule"/>
</dbReference>
<dbReference type="GO" id="GO:0006541">
    <property type="term" value="P:glutamine metabolic process"/>
    <property type="evidence" value="ECO:0007669"/>
    <property type="project" value="TreeGrafter"/>
</dbReference>
<dbReference type="GO" id="GO:0006526">
    <property type="term" value="P:L-arginine biosynthetic process"/>
    <property type="evidence" value="ECO:0007669"/>
    <property type="project" value="UniProtKB-UniRule"/>
</dbReference>
<dbReference type="CDD" id="cd01424">
    <property type="entry name" value="MGS_CPS_II"/>
    <property type="match status" value="1"/>
</dbReference>
<dbReference type="FunFam" id="1.10.1030.10:FF:000002">
    <property type="entry name" value="Carbamoyl-phosphate synthase large chain"/>
    <property type="match status" value="1"/>
</dbReference>
<dbReference type="FunFam" id="3.30.1490.20:FF:000001">
    <property type="entry name" value="Carbamoyl-phosphate synthase large chain"/>
    <property type="match status" value="1"/>
</dbReference>
<dbReference type="FunFam" id="3.30.470.20:FF:000001">
    <property type="entry name" value="Carbamoyl-phosphate synthase large chain"/>
    <property type="match status" value="1"/>
</dbReference>
<dbReference type="FunFam" id="3.30.470.20:FF:000026">
    <property type="entry name" value="Carbamoyl-phosphate synthase large chain"/>
    <property type="match status" value="1"/>
</dbReference>
<dbReference type="FunFam" id="3.40.50.20:FF:000001">
    <property type="entry name" value="Carbamoyl-phosphate synthase large chain"/>
    <property type="match status" value="2"/>
</dbReference>
<dbReference type="Gene3D" id="3.40.50.20">
    <property type="match status" value="2"/>
</dbReference>
<dbReference type="Gene3D" id="3.30.470.20">
    <property type="entry name" value="ATP-grasp fold, B domain"/>
    <property type="match status" value="2"/>
</dbReference>
<dbReference type="Gene3D" id="1.10.1030.10">
    <property type="entry name" value="Carbamoyl-phosphate synthetase, large subunit oligomerisation domain"/>
    <property type="match status" value="1"/>
</dbReference>
<dbReference type="Gene3D" id="3.40.50.1380">
    <property type="entry name" value="Methylglyoxal synthase-like domain"/>
    <property type="match status" value="1"/>
</dbReference>
<dbReference type="HAMAP" id="MF_01210_A">
    <property type="entry name" value="CPSase_L_chain_A"/>
    <property type="match status" value="1"/>
</dbReference>
<dbReference type="HAMAP" id="MF_01210_B">
    <property type="entry name" value="CPSase_L_chain_B"/>
    <property type="match status" value="1"/>
</dbReference>
<dbReference type="InterPro" id="IPR011761">
    <property type="entry name" value="ATP-grasp"/>
</dbReference>
<dbReference type="InterPro" id="IPR006275">
    <property type="entry name" value="CarbamoylP_synth_lsu"/>
</dbReference>
<dbReference type="InterPro" id="IPR005480">
    <property type="entry name" value="CarbamoylP_synth_lsu_oligo"/>
</dbReference>
<dbReference type="InterPro" id="IPR036897">
    <property type="entry name" value="CarbamoylP_synth_lsu_oligo_sf"/>
</dbReference>
<dbReference type="InterPro" id="IPR005479">
    <property type="entry name" value="CbamoylP_synth_lsu-like_ATP-bd"/>
</dbReference>
<dbReference type="InterPro" id="IPR005483">
    <property type="entry name" value="CbamoylP_synth_lsu_CPSase_dom"/>
</dbReference>
<dbReference type="InterPro" id="IPR011607">
    <property type="entry name" value="MGS-like_dom"/>
</dbReference>
<dbReference type="InterPro" id="IPR036914">
    <property type="entry name" value="MGS-like_dom_sf"/>
</dbReference>
<dbReference type="InterPro" id="IPR033937">
    <property type="entry name" value="MGS_CPS_CarB"/>
</dbReference>
<dbReference type="InterPro" id="IPR016185">
    <property type="entry name" value="PreATP-grasp_dom_sf"/>
</dbReference>
<dbReference type="NCBIfam" id="TIGR01369">
    <property type="entry name" value="CPSaseII_lrg"/>
    <property type="match status" value="1"/>
</dbReference>
<dbReference type="NCBIfam" id="NF003671">
    <property type="entry name" value="PRK05294.1"/>
    <property type="match status" value="1"/>
</dbReference>
<dbReference type="NCBIfam" id="NF009455">
    <property type="entry name" value="PRK12815.1"/>
    <property type="match status" value="1"/>
</dbReference>
<dbReference type="PANTHER" id="PTHR11405:SF53">
    <property type="entry name" value="CARBAMOYL-PHOSPHATE SYNTHASE [AMMONIA], MITOCHONDRIAL"/>
    <property type="match status" value="1"/>
</dbReference>
<dbReference type="PANTHER" id="PTHR11405">
    <property type="entry name" value="CARBAMOYLTRANSFERASE FAMILY MEMBER"/>
    <property type="match status" value="1"/>
</dbReference>
<dbReference type="Pfam" id="PF02786">
    <property type="entry name" value="CPSase_L_D2"/>
    <property type="match status" value="2"/>
</dbReference>
<dbReference type="Pfam" id="PF02787">
    <property type="entry name" value="CPSase_L_D3"/>
    <property type="match status" value="1"/>
</dbReference>
<dbReference type="Pfam" id="PF02142">
    <property type="entry name" value="MGS"/>
    <property type="match status" value="1"/>
</dbReference>
<dbReference type="PRINTS" id="PR00098">
    <property type="entry name" value="CPSASE"/>
</dbReference>
<dbReference type="SMART" id="SM01096">
    <property type="entry name" value="CPSase_L_D3"/>
    <property type="match status" value="1"/>
</dbReference>
<dbReference type="SMART" id="SM01209">
    <property type="entry name" value="GARS_A"/>
    <property type="match status" value="1"/>
</dbReference>
<dbReference type="SMART" id="SM00851">
    <property type="entry name" value="MGS"/>
    <property type="match status" value="1"/>
</dbReference>
<dbReference type="SUPFAM" id="SSF48108">
    <property type="entry name" value="Carbamoyl phosphate synthetase, large subunit connection domain"/>
    <property type="match status" value="1"/>
</dbReference>
<dbReference type="SUPFAM" id="SSF56059">
    <property type="entry name" value="Glutathione synthetase ATP-binding domain-like"/>
    <property type="match status" value="2"/>
</dbReference>
<dbReference type="SUPFAM" id="SSF52335">
    <property type="entry name" value="Methylglyoxal synthase-like"/>
    <property type="match status" value="1"/>
</dbReference>
<dbReference type="SUPFAM" id="SSF52440">
    <property type="entry name" value="PreATP-grasp domain"/>
    <property type="match status" value="2"/>
</dbReference>
<dbReference type="PROSITE" id="PS50975">
    <property type="entry name" value="ATP_GRASP"/>
    <property type="match status" value="2"/>
</dbReference>
<dbReference type="PROSITE" id="PS00866">
    <property type="entry name" value="CPSASE_1"/>
    <property type="match status" value="2"/>
</dbReference>
<dbReference type="PROSITE" id="PS00867">
    <property type="entry name" value="CPSASE_2"/>
    <property type="match status" value="2"/>
</dbReference>
<dbReference type="PROSITE" id="PS51855">
    <property type="entry name" value="MGS"/>
    <property type="match status" value="1"/>
</dbReference>
<comment type="function">
    <text evidence="1">Large subunit of the glutamine-dependent carbamoyl phosphate synthetase (CPSase). CPSase catalyzes the formation of carbamoyl phosphate from the ammonia moiety of glutamine, carbonate, and phosphate donated by ATP, constituting the first step of 2 biosynthetic pathways, one leading to arginine and/or urea and the other to pyrimidine nucleotides. The large subunit (synthetase) binds the substrates ammonia (free or transferred from glutamine from the small subunit), hydrogencarbonate and ATP and carries out an ATP-coupled ligase reaction, activating hydrogencarbonate by forming carboxy phosphate which reacts with ammonia to form carbamoyl phosphate.</text>
</comment>
<comment type="catalytic activity">
    <reaction evidence="1">
        <text>hydrogencarbonate + L-glutamine + 2 ATP + H2O = carbamoyl phosphate + L-glutamate + 2 ADP + phosphate + 2 H(+)</text>
        <dbReference type="Rhea" id="RHEA:18633"/>
        <dbReference type="ChEBI" id="CHEBI:15377"/>
        <dbReference type="ChEBI" id="CHEBI:15378"/>
        <dbReference type="ChEBI" id="CHEBI:17544"/>
        <dbReference type="ChEBI" id="CHEBI:29985"/>
        <dbReference type="ChEBI" id="CHEBI:30616"/>
        <dbReference type="ChEBI" id="CHEBI:43474"/>
        <dbReference type="ChEBI" id="CHEBI:58228"/>
        <dbReference type="ChEBI" id="CHEBI:58359"/>
        <dbReference type="ChEBI" id="CHEBI:456216"/>
        <dbReference type="EC" id="6.3.5.5"/>
    </reaction>
</comment>
<comment type="catalytic activity">
    <molecule>Carbamoyl phosphate synthase large chain</molecule>
    <reaction evidence="1">
        <text>hydrogencarbonate + NH4(+) + 2 ATP = carbamoyl phosphate + 2 ADP + phosphate + 2 H(+)</text>
        <dbReference type="Rhea" id="RHEA:18029"/>
        <dbReference type="ChEBI" id="CHEBI:15378"/>
        <dbReference type="ChEBI" id="CHEBI:17544"/>
        <dbReference type="ChEBI" id="CHEBI:28938"/>
        <dbReference type="ChEBI" id="CHEBI:30616"/>
        <dbReference type="ChEBI" id="CHEBI:43474"/>
        <dbReference type="ChEBI" id="CHEBI:58228"/>
        <dbReference type="ChEBI" id="CHEBI:456216"/>
        <dbReference type="EC" id="6.3.4.16"/>
    </reaction>
</comment>
<comment type="cofactor">
    <cofactor evidence="1">
        <name>Mg(2+)</name>
        <dbReference type="ChEBI" id="CHEBI:18420"/>
    </cofactor>
    <cofactor evidence="1">
        <name>Mn(2+)</name>
        <dbReference type="ChEBI" id="CHEBI:29035"/>
    </cofactor>
    <text evidence="1">Binds 4 Mg(2+) or Mn(2+) ions per subunit.</text>
</comment>
<comment type="pathway">
    <text evidence="1">Amino-acid biosynthesis; L-arginine biosynthesis; carbamoyl phosphate from bicarbonate: step 1/1.</text>
</comment>
<comment type="pathway">
    <text evidence="1">Pyrimidine metabolism; UMP biosynthesis via de novo pathway; (S)-dihydroorotate from bicarbonate: step 1/3.</text>
</comment>
<comment type="subunit">
    <text evidence="1">Composed of two chains; the small (or glutamine) chain promotes the hydrolysis of glutamine to ammonia, which is used by the large (or ammonia) chain to synthesize carbamoyl phosphate. Tetramer of heterodimers (alpha,beta)4.</text>
</comment>
<comment type="domain">
    <text evidence="1">The large subunit is composed of 2 ATP-grasp domains that are involved in binding the 2 ATP molecules needed for carbamoyl phosphate synthesis. The N-terminal ATP-grasp domain (referred to as the carboxyphosphate synthetic component) catalyzes the ATP-dependent phosphorylation of hydrogencarbonate to carboxyphosphate and the subsequent nucleophilic attack by ammonia to form a carbamate intermediate. The C-terminal ATP-grasp domain (referred to as the carbamoyl phosphate synthetic component) then catalyzes the phosphorylation of carbamate with the second ATP to form the end product carbamoyl phosphate. The reactive and unstable enzyme intermediates are sequentially channeled from one active site to the next through the interior of the protein over a distance of at least 96 A.</text>
</comment>
<comment type="similarity">
    <text evidence="1">Belongs to the CarB family.</text>
</comment>
<accession>Q03LT8</accession>
<sequence length="1059" mass="116445">MPKRSDIKKIMVIGSGPIIIGQAAEFDYAGTQACLALKEEGYSVVLVNSNPATIMTDKEIADKVYIEPITLEFVTRILRKERPDALLPTLGGQTGLNMAMELSKAGILDELGVELLGTKLSAIDQAEDRDLFKQLMEELEQPIPESEIVNTVEEAVAFATEIGYPVIVRPAFTLGGTGGGMCANEEELREIAENGLKLSPVTQCLIERSIAGFKEIEYEVMRDAEDNALVVCNMENFDPVGIHTGDSIVFAPTQTLSDIENQMLRDASLKIIRALKIEGGCNVQLALDPHSFKYYVIEVNPRVSRSSALASKATGYPIAKLAAKIAVGLTLDEMINPVTGTTYAMFEPALDYVVAKIPRFPFDKFEHGERRLGTQMKATGEVMAIGRNIEESLLKACRSLEIGVYHNEMSELAEVTDDALVEKVVKAQDDRLFYISEAIRRGYTIEELSELTKIDIFFLDKLLHIFELEQELAAHVGDVDVLKEAKRNGFSDRKIADLWNQTANQVRATRLENNIVPVYKMVDTCAAEFESSTPYFYSTYEWENESIKSDKESVIVLGSGPIRIGQGVEFDYATVHSVKAIQAAGYEAIIMNSNPETVSTDFSVSDKLYFEPLTFEDVMNVIELEQPKGVVVQFGGQTAINLAEPLSKAGVKILGTQVADLDRAEDRDLFEQALKDLDIPQPPGQTATNEEEAVEAARKIGFPVLVRPSYVLGGRAMEIVENEDDLRSYMRTAVKASPDHPVLVDSYIIGRECEVDAISDGKDVLIPGIMEHIERAGVHSGDSMAVYPPQTLSKKIQETIADYTKRLAIGLNCIGMMNIQFVIKDETVYVIEVNPRASRTVPFLSKVTDIPMAQVATNLILGKSLAEQGYKDGLYPESNHVHVKAPVFSFTKLAQVDSLLGPEMKSTGEVMGTDVTLEKALYKAFEASYLHLPTFGNVIFTIHDDTKEEALDLARRFDAIGYGIYATEGTAKFLNEHGVHATLVNKLGENDDNDIPALVRTGKAQAIINTVGNKRTYDEDGAAIRSSAIEAGIPLFTALDTADAMVRVLESRSFTTEAI</sequence>
<gene>
    <name evidence="1" type="primary">carB</name>
    <name type="ordered locus">STER_0559</name>
</gene>
<feature type="chain" id="PRO_1000066389" description="Carbamoyl phosphate synthase large chain">
    <location>
        <begin position="1"/>
        <end position="1059"/>
    </location>
</feature>
<feature type="domain" description="ATP-grasp 1" evidence="1">
    <location>
        <begin position="133"/>
        <end position="327"/>
    </location>
</feature>
<feature type="domain" description="ATP-grasp 2" evidence="1">
    <location>
        <begin position="671"/>
        <end position="861"/>
    </location>
</feature>
<feature type="domain" description="MGS-like" evidence="1">
    <location>
        <begin position="930"/>
        <end position="1059"/>
    </location>
</feature>
<feature type="region of interest" description="Carboxyphosphate synthetic domain" evidence="1">
    <location>
        <begin position="1"/>
        <end position="401"/>
    </location>
</feature>
<feature type="region of interest" description="Oligomerization domain" evidence="1">
    <location>
        <begin position="402"/>
        <end position="546"/>
    </location>
</feature>
<feature type="region of interest" description="Carbamoyl phosphate synthetic domain" evidence="1">
    <location>
        <begin position="547"/>
        <end position="929"/>
    </location>
</feature>
<feature type="region of interest" description="Allosteric domain" evidence="1">
    <location>
        <begin position="930"/>
        <end position="1059"/>
    </location>
</feature>
<feature type="binding site" evidence="1">
    <location>
        <position position="129"/>
    </location>
    <ligand>
        <name>ATP</name>
        <dbReference type="ChEBI" id="CHEBI:30616"/>
        <label>1</label>
    </ligand>
</feature>
<feature type="binding site" evidence="1">
    <location>
        <position position="169"/>
    </location>
    <ligand>
        <name>ATP</name>
        <dbReference type="ChEBI" id="CHEBI:30616"/>
        <label>1</label>
    </ligand>
</feature>
<feature type="binding site" evidence="1">
    <location>
        <position position="175"/>
    </location>
    <ligand>
        <name>ATP</name>
        <dbReference type="ChEBI" id="CHEBI:30616"/>
        <label>1</label>
    </ligand>
</feature>
<feature type="binding site" evidence="1">
    <location>
        <position position="176"/>
    </location>
    <ligand>
        <name>ATP</name>
        <dbReference type="ChEBI" id="CHEBI:30616"/>
        <label>1</label>
    </ligand>
</feature>
<feature type="binding site" evidence="1">
    <location>
        <position position="208"/>
    </location>
    <ligand>
        <name>ATP</name>
        <dbReference type="ChEBI" id="CHEBI:30616"/>
        <label>1</label>
    </ligand>
</feature>
<feature type="binding site" evidence="1">
    <location>
        <position position="210"/>
    </location>
    <ligand>
        <name>ATP</name>
        <dbReference type="ChEBI" id="CHEBI:30616"/>
        <label>1</label>
    </ligand>
</feature>
<feature type="binding site" evidence="1">
    <location>
        <position position="215"/>
    </location>
    <ligand>
        <name>ATP</name>
        <dbReference type="ChEBI" id="CHEBI:30616"/>
        <label>1</label>
    </ligand>
</feature>
<feature type="binding site" evidence="1">
    <location>
        <position position="241"/>
    </location>
    <ligand>
        <name>ATP</name>
        <dbReference type="ChEBI" id="CHEBI:30616"/>
        <label>1</label>
    </ligand>
</feature>
<feature type="binding site" evidence="1">
    <location>
        <position position="242"/>
    </location>
    <ligand>
        <name>ATP</name>
        <dbReference type="ChEBI" id="CHEBI:30616"/>
        <label>1</label>
    </ligand>
</feature>
<feature type="binding site" evidence="1">
    <location>
        <position position="243"/>
    </location>
    <ligand>
        <name>ATP</name>
        <dbReference type="ChEBI" id="CHEBI:30616"/>
        <label>1</label>
    </ligand>
</feature>
<feature type="binding site" evidence="1">
    <location>
        <position position="284"/>
    </location>
    <ligand>
        <name>ATP</name>
        <dbReference type="ChEBI" id="CHEBI:30616"/>
        <label>1</label>
    </ligand>
</feature>
<feature type="binding site" evidence="1">
    <location>
        <position position="284"/>
    </location>
    <ligand>
        <name>Mg(2+)</name>
        <dbReference type="ChEBI" id="CHEBI:18420"/>
        <label>1</label>
    </ligand>
</feature>
<feature type="binding site" evidence="1">
    <location>
        <position position="284"/>
    </location>
    <ligand>
        <name>Mn(2+)</name>
        <dbReference type="ChEBI" id="CHEBI:29035"/>
        <label>1</label>
    </ligand>
</feature>
<feature type="binding site" evidence="1">
    <location>
        <position position="298"/>
    </location>
    <ligand>
        <name>ATP</name>
        <dbReference type="ChEBI" id="CHEBI:30616"/>
        <label>1</label>
    </ligand>
</feature>
<feature type="binding site" evidence="1">
    <location>
        <position position="298"/>
    </location>
    <ligand>
        <name>Mg(2+)</name>
        <dbReference type="ChEBI" id="CHEBI:18420"/>
        <label>1</label>
    </ligand>
</feature>
<feature type="binding site" evidence="1">
    <location>
        <position position="298"/>
    </location>
    <ligand>
        <name>Mg(2+)</name>
        <dbReference type="ChEBI" id="CHEBI:18420"/>
        <label>2</label>
    </ligand>
</feature>
<feature type="binding site" evidence="1">
    <location>
        <position position="298"/>
    </location>
    <ligand>
        <name>Mn(2+)</name>
        <dbReference type="ChEBI" id="CHEBI:29035"/>
        <label>1</label>
    </ligand>
</feature>
<feature type="binding site" evidence="1">
    <location>
        <position position="298"/>
    </location>
    <ligand>
        <name>Mn(2+)</name>
        <dbReference type="ChEBI" id="CHEBI:29035"/>
        <label>2</label>
    </ligand>
</feature>
<feature type="binding site" evidence="1">
    <location>
        <position position="300"/>
    </location>
    <ligand>
        <name>Mg(2+)</name>
        <dbReference type="ChEBI" id="CHEBI:18420"/>
        <label>2</label>
    </ligand>
</feature>
<feature type="binding site" evidence="1">
    <location>
        <position position="300"/>
    </location>
    <ligand>
        <name>Mn(2+)</name>
        <dbReference type="ChEBI" id="CHEBI:29035"/>
        <label>2</label>
    </ligand>
</feature>
<feature type="binding site" evidence="1">
    <location>
        <position position="707"/>
    </location>
    <ligand>
        <name>ATP</name>
        <dbReference type="ChEBI" id="CHEBI:30616"/>
        <label>2</label>
    </ligand>
</feature>
<feature type="binding site" evidence="1">
    <location>
        <position position="746"/>
    </location>
    <ligand>
        <name>ATP</name>
        <dbReference type="ChEBI" id="CHEBI:30616"/>
        <label>2</label>
    </ligand>
</feature>
<feature type="binding site" evidence="1">
    <location>
        <position position="748"/>
    </location>
    <ligand>
        <name>ATP</name>
        <dbReference type="ChEBI" id="CHEBI:30616"/>
        <label>2</label>
    </ligand>
</feature>
<feature type="binding site" evidence="1">
    <location>
        <position position="752"/>
    </location>
    <ligand>
        <name>ATP</name>
        <dbReference type="ChEBI" id="CHEBI:30616"/>
        <label>2</label>
    </ligand>
</feature>
<feature type="binding site" evidence="1">
    <location>
        <position position="777"/>
    </location>
    <ligand>
        <name>ATP</name>
        <dbReference type="ChEBI" id="CHEBI:30616"/>
        <label>2</label>
    </ligand>
</feature>
<feature type="binding site" evidence="1">
    <location>
        <position position="778"/>
    </location>
    <ligand>
        <name>ATP</name>
        <dbReference type="ChEBI" id="CHEBI:30616"/>
        <label>2</label>
    </ligand>
</feature>
<feature type="binding site" evidence="1">
    <location>
        <position position="779"/>
    </location>
    <ligand>
        <name>ATP</name>
        <dbReference type="ChEBI" id="CHEBI:30616"/>
        <label>2</label>
    </ligand>
</feature>
<feature type="binding site" evidence="1">
    <location>
        <position position="780"/>
    </location>
    <ligand>
        <name>ATP</name>
        <dbReference type="ChEBI" id="CHEBI:30616"/>
        <label>2</label>
    </ligand>
</feature>
<feature type="binding site" evidence="1">
    <location>
        <position position="820"/>
    </location>
    <ligand>
        <name>ATP</name>
        <dbReference type="ChEBI" id="CHEBI:30616"/>
        <label>2</label>
    </ligand>
</feature>
<feature type="binding site" evidence="1">
    <location>
        <position position="820"/>
    </location>
    <ligand>
        <name>Mg(2+)</name>
        <dbReference type="ChEBI" id="CHEBI:18420"/>
        <label>3</label>
    </ligand>
</feature>
<feature type="binding site" evidence="1">
    <location>
        <position position="820"/>
    </location>
    <ligand>
        <name>Mn(2+)</name>
        <dbReference type="ChEBI" id="CHEBI:29035"/>
        <label>3</label>
    </ligand>
</feature>
<feature type="binding site" evidence="1">
    <location>
        <position position="832"/>
    </location>
    <ligand>
        <name>ATP</name>
        <dbReference type="ChEBI" id="CHEBI:30616"/>
        <label>2</label>
    </ligand>
</feature>
<feature type="binding site" evidence="1">
    <location>
        <position position="832"/>
    </location>
    <ligand>
        <name>Mg(2+)</name>
        <dbReference type="ChEBI" id="CHEBI:18420"/>
        <label>3</label>
    </ligand>
</feature>
<feature type="binding site" evidence="1">
    <location>
        <position position="832"/>
    </location>
    <ligand>
        <name>Mg(2+)</name>
        <dbReference type="ChEBI" id="CHEBI:18420"/>
        <label>4</label>
    </ligand>
</feature>
<feature type="binding site" evidence="1">
    <location>
        <position position="832"/>
    </location>
    <ligand>
        <name>Mn(2+)</name>
        <dbReference type="ChEBI" id="CHEBI:29035"/>
        <label>3</label>
    </ligand>
</feature>
<feature type="binding site" evidence="1">
    <location>
        <position position="832"/>
    </location>
    <ligand>
        <name>Mn(2+)</name>
        <dbReference type="ChEBI" id="CHEBI:29035"/>
        <label>4</label>
    </ligand>
</feature>
<feature type="binding site" evidence="1">
    <location>
        <position position="834"/>
    </location>
    <ligand>
        <name>Mg(2+)</name>
        <dbReference type="ChEBI" id="CHEBI:18420"/>
        <label>4</label>
    </ligand>
</feature>
<feature type="binding site" evidence="1">
    <location>
        <position position="834"/>
    </location>
    <ligand>
        <name>Mn(2+)</name>
        <dbReference type="ChEBI" id="CHEBI:29035"/>
        <label>4</label>
    </ligand>
</feature>